<comment type="function">
    <text evidence="2">FAD-linked oxidoreductase; part of the gene cluster that mediates the biosynthesis of alternapyrone derivatives (PubMed:16356847). Alternapyrone is a decaketide with octa-methylation from methionine on every C2 unit except the third unit (PubMed:16356847). All the domains in the polyketide synthase alt5 are apparently involved in alternapyrone synthesis, that is, the 8 CMeT, 7 KR, 7 DH, and 4 ER reactions in the 9 KS-mediated condensation steps required for alternapyrone synthesis (PubMed:16356847). the alternapyrone produced by alt5 might be intensively modified by cytochrome P450 monooxygenases alt1, alt2 and alt3 and FAD-dependent oxidoreductase alt4 present in the alt gene cluster (PubMed:16356847).</text>
</comment>
<comment type="cofactor">
    <cofactor evidence="5">
        <name>FAD</name>
        <dbReference type="ChEBI" id="CHEBI:57692"/>
    </cofactor>
</comment>
<comment type="pathway">
    <text evidence="5">Secondary metabolite biosynthesis.</text>
</comment>
<comment type="similarity">
    <text evidence="4">Belongs to the oxygen-dependent FAD-linked oxidoreductase family.</text>
</comment>
<proteinExistence type="inferred from homology"/>
<protein>
    <recommendedName>
        <fullName evidence="3">FAD-linked oxidoreductase alt4</fullName>
        <ecNumber evidence="5">1.-.-.-</ecNumber>
    </recommendedName>
    <alternativeName>
        <fullName evidence="3">Alternapyrone biosynthesis cluster protein 4</fullName>
    </alternativeName>
</protein>
<feature type="chain" id="PRO_0000444927" description="FAD-linked oxidoreductase alt4">
    <location>
        <begin position="1"/>
        <end position="482"/>
    </location>
</feature>
<feature type="domain" description="FAD-binding PCMH-type" evidence="1">
    <location>
        <begin position="53"/>
        <end position="211"/>
    </location>
</feature>
<reference key="1">
    <citation type="journal article" date="2005" name="Chem. Biol.">
        <title>An iterative type I polyketide synthase PKSN catalyzes synthesis of the decaketide alternapyrone with regio-specific octa-methylation.</title>
        <authorList>
            <person name="Fujii I."/>
            <person name="Yoshida N."/>
            <person name="Shimomaki S."/>
            <person name="Oikawa H."/>
            <person name="Ebizuka Y."/>
        </authorList>
    </citation>
    <scope>NUCLEOTIDE SEQUENCE [GENOMIC DNA]</scope>
    <scope>FUNCTION</scope>
    <source>
        <strain>584</strain>
    </source>
</reference>
<name>ALT4_ALTSO</name>
<evidence type="ECO:0000255" key="1">
    <source>
        <dbReference type="PROSITE-ProRule" id="PRU00718"/>
    </source>
</evidence>
<evidence type="ECO:0000269" key="2">
    <source>
    </source>
</evidence>
<evidence type="ECO:0000303" key="3">
    <source>
    </source>
</evidence>
<evidence type="ECO:0000305" key="4"/>
<evidence type="ECO:0000305" key="5">
    <source>
    </source>
</evidence>
<accession>Q5KTN0</accession>
<gene>
    <name evidence="3" type="primary">alt4</name>
</gene>
<sequence length="482" mass="55503">MDIQQGGNDLISLAATIRTELQQKLSSKARIHLPFDEDRTEFDKANLRFTQYERPTYLAIVDPVCEDDVIEAVKYARGKGIPFTPRGGHHSVTTTMGRFQNGICINMRPLNQMRWYAEKRHVTIGGGAITDEFVRFVHDLGMEVTFGAGLGRLQGKYGFLNDNMVSCKLVLADGSTVIASKDSHPDLFWALRGAGHNFGIALEATFQVYPQAHGGIHHTWDLEYTLDQCDEVFRTLNSVYESMPAELAIFILWLRQSSGRKHIILVNLVWSGPAAGADPYVQRFESLQPVLNSGRKSVPWPELPFSTYKEINKLFCNPEIWLRGPYKMMGAACVERFDLKTTREFFESVKSLSEEWEDRGWFSAMFECLPDQRVREISDDATAFPWRAGSNHFLMLNATPKRMEDRKVFEDHLNYWKRRFIETSGYGRLQQYVSYGNGTSTMKDPPEALYGYEPWRLEKLRNLKQKYDPDNVFRWYQPLLEP</sequence>
<keyword id="KW-0274">FAD</keyword>
<keyword id="KW-0285">Flavoprotein</keyword>
<keyword id="KW-0560">Oxidoreductase</keyword>
<organism>
    <name type="scientific">Alternaria solani</name>
    <dbReference type="NCBI Taxonomy" id="48100"/>
    <lineage>
        <taxon>Eukaryota</taxon>
        <taxon>Fungi</taxon>
        <taxon>Dikarya</taxon>
        <taxon>Ascomycota</taxon>
        <taxon>Pezizomycotina</taxon>
        <taxon>Dothideomycetes</taxon>
        <taxon>Pleosporomycetidae</taxon>
        <taxon>Pleosporales</taxon>
        <taxon>Pleosporineae</taxon>
        <taxon>Pleosporaceae</taxon>
        <taxon>Alternaria</taxon>
        <taxon>Alternaria sect. Porri</taxon>
    </lineage>
</organism>
<dbReference type="EC" id="1.-.-.-" evidence="5"/>
<dbReference type="EMBL" id="AB120221">
    <property type="protein sequence ID" value="BAD83683.1"/>
    <property type="molecule type" value="Genomic_DNA"/>
</dbReference>
<dbReference type="SMR" id="Q5KTN0"/>
<dbReference type="GO" id="GO:0071949">
    <property type="term" value="F:FAD binding"/>
    <property type="evidence" value="ECO:0007669"/>
    <property type="project" value="InterPro"/>
</dbReference>
<dbReference type="GO" id="GO:0016491">
    <property type="term" value="F:oxidoreductase activity"/>
    <property type="evidence" value="ECO:0007669"/>
    <property type="project" value="UniProtKB-KW"/>
</dbReference>
<dbReference type="Gene3D" id="3.30.465.10">
    <property type="match status" value="1"/>
</dbReference>
<dbReference type="Gene3D" id="3.40.462.20">
    <property type="match status" value="1"/>
</dbReference>
<dbReference type="InterPro" id="IPR012951">
    <property type="entry name" value="BBE"/>
</dbReference>
<dbReference type="InterPro" id="IPR016166">
    <property type="entry name" value="FAD-bd_PCMH"/>
</dbReference>
<dbReference type="InterPro" id="IPR036318">
    <property type="entry name" value="FAD-bd_PCMH-like_sf"/>
</dbReference>
<dbReference type="InterPro" id="IPR016169">
    <property type="entry name" value="FAD-bd_PCMH_sub2"/>
</dbReference>
<dbReference type="InterPro" id="IPR016164">
    <property type="entry name" value="FAD-linked_Oxase-like_C"/>
</dbReference>
<dbReference type="InterPro" id="IPR050416">
    <property type="entry name" value="FAD-linked_Oxidoreductase"/>
</dbReference>
<dbReference type="InterPro" id="IPR006094">
    <property type="entry name" value="Oxid_FAD_bind_N"/>
</dbReference>
<dbReference type="PANTHER" id="PTHR42973">
    <property type="entry name" value="BINDING OXIDOREDUCTASE, PUTATIVE (AFU_ORTHOLOGUE AFUA_1G17690)-RELATED"/>
    <property type="match status" value="1"/>
</dbReference>
<dbReference type="PANTHER" id="PTHR42973:SF9">
    <property type="entry name" value="FAD-BINDING PCMH-TYPE DOMAIN-CONTAINING PROTEIN-RELATED"/>
    <property type="match status" value="1"/>
</dbReference>
<dbReference type="Pfam" id="PF08031">
    <property type="entry name" value="BBE"/>
    <property type="match status" value="1"/>
</dbReference>
<dbReference type="Pfam" id="PF01565">
    <property type="entry name" value="FAD_binding_4"/>
    <property type="match status" value="1"/>
</dbReference>
<dbReference type="SUPFAM" id="SSF56176">
    <property type="entry name" value="FAD-binding/transporter-associated domain-like"/>
    <property type="match status" value="1"/>
</dbReference>
<dbReference type="SUPFAM" id="SSF55103">
    <property type="entry name" value="FAD-linked oxidases, C-terminal domain"/>
    <property type="match status" value="1"/>
</dbReference>
<dbReference type="PROSITE" id="PS51387">
    <property type="entry name" value="FAD_PCMH"/>
    <property type="match status" value="1"/>
</dbReference>